<reference key="1">
    <citation type="journal article" date="2009" name="J. Bacteriol.">
        <title>Complete and draft genome sequences of six members of the Aquificales.</title>
        <authorList>
            <person name="Reysenbach A.-L."/>
            <person name="Hamamura N."/>
            <person name="Podar M."/>
            <person name="Griffiths E."/>
            <person name="Ferreira S."/>
            <person name="Hochstein R."/>
            <person name="Heidelberg J."/>
            <person name="Johnson J."/>
            <person name="Mead D."/>
            <person name="Pohorille A."/>
            <person name="Sarmiento M."/>
            <person name="Schweighofer K."/>
            <person name="Seshadri R."/>
            <person name="Voytek M.A."/>
        </authorList>
    </citation>
    <scope>NUCLEOTIDE SEQUENCE [LARGE SCALE GENOMIC DNA]</scope>
    <source>
        <strain>Y04AAS1</strain>
    </source>
</reference>
<comment type="function">
    <text evidence="1">Converts 2C-methyl-D-erythritol 2,4-cyclodiphosphate (ME-2,4cPP) into 1-hydroxy-2-methyl-2-(E)-butenyl 4-diphosphate.</text>
</comment>
<comment type="catalytic activity">
    <reaction evidence="1">
        <text>(2E)-4-hydroxy-3-methylbut-2-enyl diphosphate + oxidized [flavodoxin] + H2O + 2 H(+) = 2-C-methyl-D-erythritol 2,4-cyclic diphosphate + reduced [flavodoxin]</text>
        <dbReference type="Rhea" id="RHEA:43604"/>
        <dbReference type="Rhea" id="RHEA-COMP:10622"/>
        <dbReference type="Rhea" id="RHEA-COMP:10623"/>
        <dbReference type="ChEBI" id="CHEBI:15377"/>
        <dbReference type="ChEBI" id="CHEBI:15378"/>
        <dbReference type="ChEBI" id="CHEBI:57618"/>
        <dbReference type="ChEBI" id="CHEBI:58210"/>
        <dbReference type="ChEBI" id="CHEBI:58483"/>
        <dbReference type="ChEBI" id="CHEBI:128753"/>
        <dbReference type="EC" id="1.17.7.3"/>
    </reaction>
</comment>
<comment type="cofactor">
    <cofactor evidence="1">
        <name>[4Fe-4S] cluster</name>
        <dbReference type="ChEBI" id="CHEBI:49883"/>
    </cofactor>
    <text evidence="1">Binds 1 [4Fe-4S] cluster.</text>
</comment>
<comment type="pathway">
    <text evidence="1">Isoprenoid biosynthesis; isopentenyl diphosphate biosynthesis via DXP pathway; isopentenyl diphosphate from 1-deoxy-D-xylulose 5-phosphate: step 5/6.</text>
</comment>
<comment type="similarity">
    <text evidence="1">Belongs to the IspG family.</text>
</comment>
<dbReference type="EC" id="1.17.7.3" evidence="1"/>
<dbReference type="EMBL" id="CP001130">
    <property type="protein sequence ID" value="ACG57914.1"/>
    <property type="molecule type" value="Genomic_DNA"/>
</dbReference>
<dbReference type="RefSeq" id="WP_012514270.1">
    <property type="nucleotide sequence ID" value="NC_011126.1"/>
</dbReference>
<dbReference type="SMR" id="B4U9V3"/>
<dbReference type="STRING" id="380749.HY04AAS1_1229"/>
<dbReference type="KEGG" id="hya:HY04AAS1_1229"/>
<dbReference type="eggNOG" id="COG0821">
    <property type="taxonomic scope" value="Bacteria"/>
</dbReference>
<dbReference type="HOGENOM" id="CLU_042258_0_0_0"/>
<dbReference type="OrthoDB" id="9803214at2"/>
<dbReference type="UniPathway" id="UPA00056">
    <property type="reaction ID" value="UER00096"/>
</dbReference>
<dbReference type="GO" id="GO:0051539">
    <property type="term" value="F:4 iron, 4 sulfur cluster binding"/>
    <property type="evidence" value="ECO:0007669"/>
    <property type="project" value="UniProtKB-UniRule"/>
</dbReference>
<dbReference type="GO" id="GO:0046429">
    <property type="term" value="F:4-hydroxy-3-methylbut-2-en-1-yl diphosphate synthase activity (ferredoxin)"/>
    <property type="evidence" value="ECO:0007669"/>
    <property type="project" value="UniProtKB-UniRule"/>
</dbReference>
<dbReference type="GO" id="GO:0141197">
    <property type="term" value="F:4-hydroxy-3-methylbut-2-enyl-diphosphate synthase activity (flavodoxin)"/>
    <property type="evidence" value="ECO:0007669"/>
    <property type="project" value="UniProtKB-EC"/>
</dbReference>
<dbReference type="GO" id="GO:0005506">
    <property type="term" value="F:iron ion binding"/>
    <property type="evidence" value="ECO:0007669"/>
    <property type="project" value="InterPro"/>
</dbReference>
<dbReference type="GO" id="GO:0019288">
    <property type="term" value="P:isopentenyl diphosphate biosynthetic process, methylerythritol 4-phosphate pathway"/>
    <property type="evidence" value="ECO:0007669"/>
    <property type="project" value="UniProtKB-UniRule"/>
</dbReference>
<dbReference type="GO" id="GO:0016114">
    <property type="term" value="P:terpenoid biosynthetic process"/>
    <property type="evidence" value="ECO:0007669"/>
    <property type="project" value="InterPro"/>
</dbReference>
<dbReference type="FunFam" id="3.20.20.20:FF:000001">
    <property type="entry name" value="4-hydroxy-3-methylbut-2-en-1-yl diphosphate synthase (flavodoxin)"/>
    <property type="match status" value="1"/>
</dbReference>
<dbReference type="Gene3D" id="3.20.20.20">
    <property type="entry name" value="Dihydropteroate synthase-like"/>
    <property type="match status" value="1"/>
</dbReference>
<dbReference type="Gene3D" id="3.30.413.10">
    <property type="entry name" value="Sulfite Reductase Hemoprotein, domain 1"/>
    <property type="match status" value="1"/>
</dbReference>
<dbReference type="HAMAP" id="MF_00159">
    <property type="entry name" value="IspG"/>
    <property type="match status" value="1"/>
</dbReference>
<dbReference type="InterPro" id="IPR011005">
    <property type="entry name" value="Dihydropteroate_synth-like_sf"/>
</dbReference>
<dbReference type="InterPro" id="IPR016425">
    <property type="entry name" value="IspG_bac"/>
</dbReference>
<dbReference type="InterPro" id="IPR004588">
    <property type="entry name" value="IspG_bac-typ"/>
</dbReference>
<dbReference type="InterPro" id="IPR045854">
    <property type="entry name" value="NO2/SO3_Rdtase_4Fe4S_sf"/>
</dbReference>
<dbReference type="NCBIfam" id="TIGR00612">
    <property type="entry name" value="ispG_gcpE"/>
    <property type="match status" value="1"/>
</dbReference>
<dbReference type="NCBIfam" id="NF001540">
    <property type="entry name" value="PRK00366.1"/>
    <property type="match status" value="1"/>
</dbReference>
<dbReference type="PANTHER" id="PTHR30454">
    <property type="entry name" value="4-HYDROXY-3-METHYLBUT-2-EN-1-YL DIPHOSPHATE SYNTHASE"/>
    <property type="match status" value="1"/>
</dbReference>
<dbReference type="PANTHER" id="PTHR30454:SF0">
    <property type="entry name" value="4-HYDROXY-3-METHYLBUT-2-EN-1-YL DIPHOSPHATE SYNTHASE (FERREDOXIN), CHLOROPLASTIC"/>
    <property type="match status" value="1"/>
</dbReference>
<dbReference type="Pfam" id="PF04551">
    <property type="entry name" value="GcpE"/>
    <property type="match status" value="1"/>
</dbReference>
<dbReference type="PIRSF" id="PIRSF004640">
    <property type="entry name" value="IspG"/>
    <property type="match status" value="1"/>
</dbReference>
<dbReference type="SUPFAM" id="SSF51395">
    <property type="entry name" value="FMN-linked oxidoreductases"/>
    <property type="match status" value="1"/>
</dbReference>
<dbReference type="SUPFAM" id="SSF56014">
    <property type="entry name" value="Nitrite and sulphite reductase 4Fe-4S domain-like"/>
    <property type="match status" value="1"/>
</dbReference>
<name>ISPG_HYDS0</name>
<organism>
    <name type="scientific">Hydrogenobaculum sp. (strain Y04AAS1)</name>
    <dbReference type="NCBI Taxonomy" id="380749"/>
    <lineage>
        <taxon>Bacteria</taxon>
        <taxon>Pseudomonadati</taxon>
        <taxon>Aquificota</taxon>
        <taxon>Aquificia</taxon>
        <taxon>Aquificales</taxon>
        <taxon>Aquificaceae</taxon>
        <taxon>Hydrogenobaculum</taxon>
    </lineage>
</organism>
<accession>B4U9V3</accession>
<proteinExistence type="inferred from homology"/>
<gene>
    <name evidence="1" type="primary">ispG</name>
    <name type="ordered locus">HY04AAS1_1229</name>
</gene>
<keyword id="KW-0004">4Fe-4S</keyword>
<keyword id="KW-0408">Iron</keyword>
<keyword id="KW-0411">Iron-sulfur</keyword>
<keyword id="KW-0414">Isoprene biosynthesis</keyword>
<keyword id="KW-0479">Metal-binding</keyword>
<keyword id="KW-0560">Oxidoreductase</keyword>
<feature type="chain" id="PRO_1000123450" description="4-hydroxy-3-methylbut-2-en-1-yl diphosphate synthase (flavodoxin)">
    <location>
        <begin position="1"/>
        <end position="354"/>
    </location>
</feature>
<feature type="binding site" evidence="1">
    <location>
        <position position="265"/>
    </location>
    <ligand>
        <name>[4Fe-4S] cluster</name>
        <dbReference type="ChEBI" id="CHEBI:49883"/>
    </ligand>
</feature>
<feature type="binding site" evidence="1">
    <location>
        <position position="268"/>
    </location>
    <ligand>
        <name>[4Fe-4S] cluster</name>
        <dbReference type="ChEBI" id="CHEBI:49883"/>
    </ligand>
</feature>
<feature type="binding site" evidence="1">
    <location>
        <position position="300"/>
    </location>
    <ligand>
        <name>[4Fe-4S] cluster</name>
        <dbReference type="ChEBI" id="CHEBI:49883"/>
    </ligand>
</feature>
<feature type="binding site" evidence="1">
    <location>
        <position position="307"/>
    </location>
    <ligand>
        <name>[4Fe-4S] cluster</name>
        <dbReference type="ChEBI" id="CHEBI:49883"/>
    </ligand>
</feature>
<protein>
    <recommendedName>
        <fullName evidence="1">4-hydroxy-3-methylbut-2-en-1-yl diphosphate synthase (flavodoxin)</fullName>
        <ecNumber evidence="1">1.17.7.3</ecNumber>
    </recommendedName>
    <alternativeName>
        <fullName evidence="1">1-hydroxy-2-methyl-2-(E)-butenyl 4-diphosphate synthase</fullName>
    </alternativeName>
</protein>
<sequence length="354" mass="38600">MIKRRKTREITLGTLKIGGNNPIVVQSMTSTKTHDIEATISQIDRLIKAGCEAIRVAVPAKEDAEALKEIVKYSEVPIIADIHFVPYMAFLSMEAGAHGIRINPGNINKKEIVRDIVLEAKKRNICVRLGVNSGSLEKHLLEKYGYPSAEALAESALNWSEFFESLGFYNFKVSIKGSDVIQNALANEIFAEKTDTPLHIGITEAGMGTQGIVKSSVGLGILLYKGIGDTIRVSLTDEPEKEVEVAYEILKSLGLKKKGIDIVSCPTCGRIEVNLPNVVKQVQEALKDKDLSIKVAIMGCAVNAIGEASHADVGLACMKGGALLFKNGKILKKVTEENMVSELLETIEKYYQEV</sequence>
<evidence type="ECO:0000255" key="1">
    <source>
        <dbReference type="HAMAP-Rule" id="MF_00159"/>
    </source>
</evidence>